<comment type="function">
    <text evidence="1">Has insecticidal activity against the locust M.palpalis. When administered orally to locusts at a low dose it causes them to lie on their sides exhibiting sporadic limb movements and muscular twitching, followed by full recovery. When administered at higher doses the same symptoms are observed, followed by death.</text>
</comment>
<comment type="catalytic activity">
    <reaction evidence="1">
        <text>Preferential cleavage of bonds with hydrophobic residues in P1'.</text>
        <dbReference type="EC" id="3.4.24.40"/>
    </reaction>
</comment>
<comment type="cofactor">
    <cofactor evidence="1">
        <name>Ca(2+)</name>
        <dbReference type="ChEBI" id="CHEBI:29108"/>
    </cofactor>
    <text evidence="1">Binds 7 Ca(2+) ions per subunit.</text>
</comment>
<comment type="cofactor">
    <cofactor evidence="1">
        <name>Zn(2+)</name>
        <dbReference type="ChEBI" id="CHEBI:29105"/>
    </cofactor>
    <text evidence="1">Binds 1 zinc ion per subunit.</text>
</comment>
<comment type="subcellular location">
    <subcellularLocation>
        <location>Secreted</location>
    </subcellularLocation>
</comment>
<comment type="miscellaneous">
    <text>The Gly-rich repeats may be important in the extracellular secretion of this metalloprotease.</text>
</comment>
<comment type="similarity">
    <text evidence="2">Belongs to the peptidase M10B family.</text>
</comment>
<comment type="sequence caution" evidence="2">
    <conflict type="erroneous initiation">
        <sequence resource="EMBL-CDS" id="CAA39138"/>
    </conflict>
</comment>
<comment type="sequence caution" evidence="2">
    <conflict type="erroneous initiation">
        <sequence resource="EMBL-CDS" id="CAA39139"/>
    </conflict>
</comment>
<feature type="propeptide" id="PRO_0000028693">
    <location>
        <begin position="1"/>
        <end position="16"/>
    </location>
</feature>
<feature type="chain" id="PRO_0000028694" description="Serralysin">
    <location>
        <begin position="17"/>
        <end position="487"/>
    </location>
</feature>
<feature type="repeat" description="Hemolysin-type calcium-binding 1">
    <location>
        <begin position="348"/>
        <end position="365"/>
    </location>
</feature>
<feature type="repeat" description="Hemolysin-type calcium-binding 2">
    <location>
        <begin position="366"/>
        <end position="383"/>
    </location>
</feature>
<feature type="active site">
    <location>
        <position position="193"/>
    </location>
</feature>
<feature type="binding site">
    <location>
        <position position="192"/>
    </location>
    <ligand>
        <name>Zn(2+)</name>
        <dbReference type="ChEBI" id="CHEBI:29105"/>
        <note>catalytic</note>
    </ligand>
</feature>
<feature type="binding site">
    <location>
        <position position="196"/>
    </location>
    <ligand>
        <name>Zn(2+)</name>
        <dbReference type="ChEBI" id="CHEBI:29105"/>
        <note>catalytic</note>
    </ligand>
</feature>
<feature type="binding site">
    <location>
        <position position="202"/>
    </location>
    <ligand>
        <name>Zn(2+)</name>
        <dbReference type="ChEBI" id="CHEBI:29105"/>
        <note>catalytic</note>
    </ligand>
</feature>
<feature type="binding site">
    <location>
        <position position="232"/>
    </location>
    <ligand>
        <name>Zn(2+)</name>
        <dbReference type="ChEBI" id="CHEBI:29105"/>
        <note>catalytic</note>
    </ligand>
</feature>
<feature type="binding site">
    <location>
        <position position="269"/>
    </location>
    <ligand>
        <name>Ca(2+)</name>
        <dbReference type="ChEBI" id="CHEBI:29108"/>
        <label>1</label>
    </ligand>
</feature>
<feature type="binding site">
    <location>
        <position position="271"/>
    </location>
    <ligand>
        <name>Ca(2+)</name>
        <dbReference type="ChEBI" id="CHEBI:29108"/>
        <label>1</label>
    </ligand>
</feature>
<feature type="binding site">
    <location>
        <position position="273"/>
    </location>
    <ligand>
        <name>Ca(2+)</name>
        <dbReference type="ChEBI" id="CHEBI:29108"/>
        <label>1</label>
    </ligand>
</feature>
<feature type="binding site">
    <location>
        <position position="301"/>
    </location>
    <ligand>
        <name>Ca(2+)</name>
        <dbReference type="ChEBI" id="CHEBI:29108"/>
        <label>1</label>
    </ligand>
</feature>
<feature type="binding site">
    <location>
        <position position="303"/>
    </location>
    <ligand>
        <name>Ca(2+)</name>
        <dbReference type="ChEBI" id="CHEBI:29108"/>
        <label>1</label>
    </ligand>
</feature>
<feature type="binding site">
    <location>
        <position position="304"/>
    </location>
    <ligand>
        <name>Ca(2+)</name>
        <dbReference type="ChEBI" id="CHEBI:29108"/>
        <label>2</label>
    </ligand>
</feature>
<feature type="binding site">
    <location>
        <position position="306"/>
    </location>
    <ligand>
        <name>Ca(2+)</name>
        <dbReference type="ChEBI" id="CHEBI:29108"/>
        <label>1</label>
    </ligand>
</feature>
<feature type="binding site">
    <location>
        <position position="306"/>
    </location>
    <ligand>
        <name>Ca(2+)</name>
        <dbReference type="ChEBI" id="CHEBI:29108"/>
        <label>2</label>
    </ligand>
</feature>
<feature type="binding site">
    <location>
        <position position="343"/>
    </location>
    <ligand>
        <name>Ca(2+)</name>
        <dbReference type="ChEBI" id="CHEBI:29108"/>
        <label>2</label>
    </ligand>
</feature>
<feature type="binding site">
    <location>
        <position position="345"/>
    </location>
    <ligand>
        <name>Ca(2+)</name>
        <dbReference type="ChEBI" id="CHEBI:29108"/>
        <label>2</label>
    </ligand>
</feature>
<feature type="binding site">
    <location>
        <position position="350"/>
    </location>
    <ligand>
        <name>Ca(2+)</name>
        <dbReference type="ChEBI" id="CHEBI:29108"/>
        <label>3</label>
    </ligand>
</feature>
<feature type="binding site">
    <location>
        <position position="352"/>
    </location>
    <ligand>
        <name>Ca(2+)</name>
        <dbReference type="ChEBI" id="CHEBI:29108"/>
        <label>3</label>
    </ligand>
</feature>
<feature type="binding site">
    <location>
        <position position="354"/>
    </location>
    <ligand>
        <name>Ca(2+)</name>
        <dbReference type="ChEBI" id="CHEBI:29108"/>
        <label>3</label>
    </ligand>
</feature>
<feature type="binding site">
    <location>
        <position position="359"/>
    </location>
    <ligand>
        <name>Ca(2+)</name>
        <dbReference type="ChEBI" id="CHEBI:29108"/>
        <label>4</label>
    </ligand>
</feature>
<feature type="binding site">
    <location>
        <position position="361"/>
    </location>
    <ligand>
        <name>Ca(2+)</name>
        <dbReference type="ChEBI" id="CHEBI:29108"/>
        <label>4</label>
    </ligand>
</feature>
<feature type="binding site">
    <location>
        <position position="363"/>
    </location>
    <ligand>
        <name>Ca(2+)</name>
        <dbReference type="ChEBI" id="CHEBI:29108"/>
        <label>4</label>
    </ligand>
</feature>
<feature type="binding site">
    <location>
        <position position="367"/>
    </location>
    <ligand>
        <name>Ca(2+)</name>
        <dbReference type="ChEBI" id="CHEBI:29108"/>
        <label>3</label>
    </ligand>
</feature>
<feature type="binding site">
    <location>
        <position position="368"/>
    </location>
    <ligand>
        <name>Ca(2+)</name>
        <dbReference type="ChEBI" id="CHEBI:29108"/>
        <label>5</label>
    </ligand>
</feature>
<feature type="binding site">
    <location>
        <position position="369"/>
    </location>
    <ligand>
        <name>Ca(2+)</name>
        <dbReference type="ChEBI" id="CHEBI:29108"/>
        <label>3</label>
    </ligand>
</feature>
<feature type="binding site">
    <location>
        <position position="370"/>
    </location>
    <ligand>
        <name>Ca(2+)</name>
        <dbReference type="ChEBI" id="CHEBI:29108"/>
        <label>5</label>
    </ligand>
</feature>
<feature type="binding site">
    <location>
        <position position="372"/>
    </location>
    <ligand>
        <name>Ca(2+)</name>
        <dbReference type="ChEBI" id="CHEBI:29108"/>
        <label>3</label>
    </ligand>
</feature>
<feature type="binding site">
    <location>
        <position position="372"/>
    </location>
    <ligand>
        <name>Ca(2+)</name>
        <dbReference type="ChEBI" id="CHEBI:29108"/>
        <label>5</label>
    </ligand>
</feature>
<feature type="binding site">
    <location>
        <position position="376"/>
    </location>
    <ligand>
        <name>Ca(2+)</name>
        <dbReference type="ChEBI" id="CHEBI:29108"/>
        <label>4</label>
    </ligand>
</feature>
<feature type="binding site">
    <location>
        <position position="377"/>
    </location>
    <ligand>
        <name>Ca(2+)</name>
        <dbReference type="ChEBI" id="CHEBI:29108"/>
        <label>6</label>
    </ligand>
</feature>
<feature type="binding site">
    <location>
        <position position="378"/>
    </location>
    <ligand>
        <name>Ca(2+)</name>
        <dbReference type="ChEBI" id="CHEBI:29108"/>
        <label>4</label>
    </ligand>
</feature>
<feature type="binding site">
    <location>
        <position position="379"/>
    </location>
    <ligand>
        <name>Ca(2+)</name>
        <dbReference type="ChEBI" id="CHEBI:29108"/>
        <label>6</label>
    </ligand>
</feature>
<feature type="binding site">
    <location>
        <position position="381"/>
    </location>
    <ligand>
        <name>Ca(2+)</name>
        <dbReference type="ChEBI" id="CHEBI:29108"/>
        <label>4</label>
    </ligand>
</feature>
<feature type="binding site">
    <location>
        <position position="381"/>
    </location>
    <ligand>
        <name>Ca(2+)</name>
        <dbReference type="ChEBI" id="CHEBI:29108"/>
        <label>6</label>
    </ligand>
</feature>
<feature type="binding site">
    <location>
        <position position="385"/>
    </location>
    <ligand>
        <name>Ca(2+)</name>
        <dbReference type="ChEBI" id="CHEBI:29108"/>
        <label>5</label>
    </ligand>
</feature>
<feature type="binding site">
    <location>
        <position position="386"/>
    </location>
    <ligand>
        <name>Ca(2+)</name>
        <dbReference type="ChEBI" id="CHEBI:29108"/>
        <label>7</label>
    </ligand>
</feature>
<feature type="binding site">
    <location>
        <position position="387"/>
    </location>
    <ligand>
        <name>Ca(2+)</name>
        <dbReference type="ChEBI" id="CHEBI:29108"/>
        <label>5</label>
    </ligand>
</feature>
<feature type="binding site">
    <location>
        <position position="388"/>
    </location>
    <ligand>
        <name>Ca(2+)</name>
        <dbReference type="ChEBI" id="CHEBI:29108"/>
        <label>7</label>
    </ligand>
</feature>
<feature type="binding site">
    <location>
        <position position="390"/>
    </location>
    <ligand>
        <name>Ca(2+)</name>
        <dbReference type="ChEBI" id="CHEBI:29108"/>
        <label>5</label>
    </ligand>
</feature>
<feature type="binding site">
    <location>
        <position position="390"/>
    </location>
    <ligand>
        <name>Ca(2+)</name>
        <dbReference type="ChEBI" id="CHEBI:29108"/>
        <label>7</label>
    </ligand>
</feature>
<feature type="binding site">
    <location>
        <position position="399"/>
    </location>
    <ligand>
        <name>Ca(2+)</name>
        <dbReference type="ChEBI" id="CHEBI:29108"/>
        <label>6</label>
    </ligand>
</feature>
<feature type="binding site">
    <location>
        <position position="406"/>
    </location>
    <ligand>
        <name>Ca(2+)</name>
        <dbReference type="ChEBI" id="CHEBI:29108"/>
        <label>6</label>
    </ligand>
</feature>
<feature type="binding site">
    <location>
        <position position="416"/>
    </location>
    <ligand>
        <name>Ca(2+)</name>
        <dbReference type="ChEBI" id="CHEBI:29108"/>
        <label>7</label>
    </ligand>
</feature>
<feature type="sequence conflict" description="In Ref. 2; AA sequence." evidence="2" ref="2">
    <original>S</original>
    <variation>E</variation>
    <location>
        <position position="14"/>
    </location>
</feature>
<feature type="helix" evidence="5">
    <location>
        <begin position="21"/>
        <end position="29"/>
    </location>
</feature>
<feature type="turn" evidence="5">
    <location>
        <begin position="30"/>
        <end position="32"/>
    </location>
</feature>
<feature type="helix" evidence="5">
    <location>
        <begin position="48"/>
        <end position="55"/>
    </location>
</feature>
<feature type="turn" evidence="5">
    <location>
        <begin position="56"/>
        <end position="58"/>
    </location>
</feature>
<feature type="strand" evidence="5">
    <location>
        <begin position="72"/>
        <end position="77"/>
    </location>
</feature>
<feature type="helix" evidence="5">
    <location>
        <begin position="99"/>
        <end position="115"/>
    </location>
</feature>
<feature type="strand" evidence="5">
    <location>
        <begin position="116"/>
        <end position="122"/>
    </location>
</feature>
<feature type="strand" evidence="5">
    <location>
        <begin position="130"/>
        <end position="136"/>
    </location>
</feature>
<feature type="strand" evidence="5">
    <location>
        <begin position="138"/>
        <end position="140"/>
    </location>
</feature>
<feature type="strand" evidence="5">
    <location>
        <begin position="150"/>
        <end position="152"/>
    </location>
</feature>
<feature type="strand" evidence="5">
    <location>
        <begin position="167"/>
        <end position="171"/>
    </location>
</feature>
<feature type="helix" evidence="5">
    <location>
        <begin position="175"/>
        <end position="178"/>
    </location>
</feature>
<feature type="turn" evidence="5">
    <location>
        <begin position="180"/>
        <end position="182"/>
    </location>
</feature>
<feature type="helix" evidence="5">
    <location>
        <begin position="184"/>
        <end position="198"/>
    </location>
</feature>
<feature type="strand" evidence="3">
    <location>
        <begin position="203"/>
        <end position="205"/>
    </location>
</feature>
<feature type="helix" evidence="5">
    <location>
        <begin position="207"/>
        <end position="209"/>
    </location>
</feature>
<feature type="helix" evidence="5">
    <location>
        <begin position="215"/>
        <end position="217"/>
    </location>
</feature>
<feature type="turn" evidence="5">
    <location>
        <begin position="225"/>
        <end position="227"/>
    </location>
</feature>
<feature type="helix" evidence="5">
    <location>
        <begin position="235"/>
        <end position="238"/>
    </location>
</feature>
<feature type="helix" evidence="5">
    <location>
        <begin position="252"/>
        <end position="262"/>
    </location>
</feature>
<feature type="turn" evidence="5">
    <location>
        <begin position="266"/>
        <end position="269"/>
    </location>
</feature>
<feature type="strand" evidence="5">
    <location>
        <begin position="274"/>
        <end position="276"/>
    </location>
</feature>
<feature type="helix" evidence="5">
    <location>
        <begin position="284"/>
        <end position="286"/>
    </location>
</feature>
<feature type="strand" evidence="5">
    <location>
        <begin position="297"/>
        <end position="299"/>
    </location>
</feature>
<feature type="strand" evidence="5">
    <location>
        <begin position="307"/>
        <end position="309"/>
    </location>
</feature>
<feature type="strand" evidence="5">
    <location>
        <begin position="318"/>
        <end position="320"/>
    </location>
</feature>
<feature type="strand" evidence="5">
    <location>
        <begin position="326"/>
        <end position="328"/>
    </location>
</feature>
<feature type="strand" evidence="5">
    <location>
        <begin position="336"/>
        <end position="338"/>
    </location>
</feature>
<feature type="strand" evidence="5">
    <location>
        <begin position="346"/>
        <end position="348"/>
    </location>
</feature>
<feature type="strand" evidence="5">
    <location>
        <begin position="355"/>
        <end position="357"/>
    </location>
</feature>
<feature type="strand" evidence="5">
    <location>
        <begin position="364"/>
        <end position="366"/>
    </location>
</feature>
<feature type="strand" evidence="5">
    <location>
        <begin position="373"/>
        <end position="375"/>
    </location>
</feature>
<feature type="strand" evidence="5">
    <location>
        <begin position="382"/>
        <end position="384"/>
    </location>
</feature>
<feature type="strand" evidence="5">
    <location>
        <begin position="391"/>
        <end position="393"/>
    </location>
</feature>
<feature type="helix" evidence="5">
    <location>
        <begin position="397"/>
        <end position="400"/>
    </location>
</feature>
<feature type="strand" evidence="5">
    <location>
        <begin position="407"/>
        <end position="410"/>
    </location>
</feature>
<feature type="turn" evidence="5">
    <location>
        <begin position="413"/>
        <end position="415"/>
    </location>
</feature>
<feature type="strand" evidence="5">
    <location>
        <begin position="417"/>
        <end position="419"/>
    </location>
</feature>
<feature type="helix" evidence="5">
    <location>
        <begin position="421"/>
        <end position="427"/>
    </location>
</feature>
<feature type="strand" evidence="5">
    <location>
        <begin position="432"/>
        <end position="435"/>
    </location>
</feature>
<feature type="strand" evidence="5">
    <location>
        <begin position="445"/>
        <end position="451"/>
    </location>
</feature>
<feature type="turn" evidence="5">
    <location>
        <begin position="452"/>
        <end position="455"/>
    </location>
</feature>
<feature type="strand" evidence="5">
    <location>
        <begin position="456"/>
        <end position="461"/>
    </location>
</feature>
<feature type="strand" evidence="4">
    <location>
        <begin position="463"/>
        <end position="465"/>
    </location>
</feature>
<feature type="strand" evidence="5">
    <location>
        <begin position="470"/>
        <end position="477"/>
    </location>
</feature>
<feature type="turn" evidence="5">
    <location>
        <begin position="481"/>
        <end position="483"/>
    </location>
</feature>
<feature type="strand" evidence="5">
    <location>
        <begin position="484"/>
        <end position="486"/>
    </location>
</feature>
<evidence type="ECO:0000269" key="1">
    <source>
    </source>
</evidence>
<evidence type="ECO:0000305" key="2"/>
<evidence type="ECO:0007829" key="3">
    <source>
        <dbReference type="PDB" id="1AF0"/>
    </source>
</evidence>
<evidence type="ECO:0007829" key="4">
    <source>
        <dbReference type="PDB" id="4I35"/>
    </source>
</evidence>
<evidence type="ECO:0007829" key="5">
    <source>
        <dbReference type="PDB" id="5D7W"/>
    </source>
</evidence>
<keyword id="KW-0002">3D-structure</keyword>
<keyword id="KW-0106">Calcium</keyword>
<keyword id="KW-0903">Direct protein sequencing</keyword>
<keyword id="KW-0378">Hydrolase</keyword>
<keyword id="KW-0479">Metal-binding</keyword>
<keyword id="KW-0482">Metalloprotease</keyword>
<keyword id="KW-0645">Protease</keyword>
<keyword id="KW-0677">Repeat</keyword>
<keyword id="KW-0964">Secreted</keyword>
<keyword id="KW-0800">Toxin</keyword>
<keyword id="KW-0843">Virulence</keyword>
<keyword id="KW-0862">Zinc</keyword>
<keyword id="KW-0865">Zymogen</keyword>
<proteinExistence type="evidence at protein level"/>
<name>PRZN_SERMA</name>
<organism>
    <name type="scientific">Serratia marcescens</name>
    <dbReference type="NCBI Taxonomy" id="615"/>
    <lineage>
        <taxon>Bacteria</taxon>
        <taxon>Pseudomonadati</taxon>
        <taxon>Pseudomonadota</taxon>
        <taxon>Gammaproteobacteria</taxon>
        <taxon>Enterobacterales</taxon>
        <taxon>Yersiniaceae</taxon>
        <taxon>Serratia</taxon>
    </lineage>
</organism>
<protein>
    <recommendedName>
        <fullName>Serralysin</fullName>
        <ecNumber>3.4.24.40</ecNumber>
    </recommendedName>
    <alternativeName>
        <fullName>Extracellular metalloproteinase</fullName>
    </alternativeName>
    <alternativeName>
        <fullName>Zinc proteinase</fullName>
    </alternativeName>
</protein>
<sequence length="487" mass="52105">MQSTKKAIEITESSLAAATTGYDAVDDLLHYHERGNGIQINGKDSFSNEQAGLFITRENQTWNGYKVFGQPVKLTFSFPDYKFSSTNVAGDTGLSKFSAEQQQQAKLSLQSWADVANITFTEVAAGQKANITFGNYSQDRPGHYDYGTQAYAFLPNTIWQGQDLGGQTWYNVNQSNVKHPATEDYGRQTFTHEIGHALGLSHPGDYNAGEGNPTYNDVTYAEDTRQFSLMSYWSETNTGGDNGGHYAAAPLLDDIAAIQHLYGANPSTRTGDTVYGFNSNTGRDFLSTTSNSQKVIFAAWDAGGNDTFDFSGYTANQRINLNEKSFSDVGGLKGNVSIAAGVTIENAIGGSGNDVIVGNAANNVLKGGAGNDVLFGGGGADELWGGAGKDIFVFSAASDSAPGASDWIRDFQKGIDKIDLSFFNKEANSSDFIHFVDHFSGTAGEALLSYNASSNVTDLSVNIGGHQAPDFLVKIVGQVDVATDFIV</sequence>
<dbReference type="EC" id="3.4.24.40"/>
<dbReference type="EMBL" id="X55521">
    <property type="protein sequence ID" value="CAA39137.1"/>
    <property type="molecule type" value="Genomic_DNA"/>
</dbReference>
<dbReference type="EMBL" id="X55521">
    <property type="protein sequence ID" value="CAA39138.1"/>
    <property type="status" value="ALT_INIT"/>
    <property type="molecule type" value="Genomic_DNA"/>
</dbReference>
<dbReference type="EMBL" id="X55521">
    <property type="protein sequence ID" value="CAA39139.1"/>
    <property type="status" value="ALT_INIT"/>
    <property type="molecule type" value="Genomic_DNA"/>
</dbReference>
<dbReference type="PIR" id="S12164">
    <property type="entry name" value="S12164"/>
</dbReference>
<dbReference type="PDB" id="1AF0">
    <property type="method" value="X-ray"/>
    <property type="resolution" value="1.80 A"/>
    <property type="chains" value="A=17-487"/>
</dbReference>
<dbReference type="PDB" id="1SAT">
    <property type="method" value="X-ray"/>
    <property type="resolution" value="1.75 A"/>
    <property type="chains" value="A=17-487"/>
</dbReference>
<dbReference type="PDB" id="1SMP">
    <property type="method" value="X-ray"/>
    <property type="resolution" value="2.30 A"/>
    <property type="chains" value="A=17-487"/>
</dbReference>
<dbReference type="PDB" id="4I35">
    <property type="method" value="X-ray"/>
    <property type="resolution" value="1.50 A"/>
    <property type="chains" value="A=19-487"/>
</dbReference>
<dbReference type="PDB" id="5D7W">
    <property type="method" value="X-ray"/>
    <property type="resolution" value="1.10 A"/>
    <property type="chains" value="A=20-487"/>
</dbReference>
<dbReference type="PDBsum" id="1AF0"/>
<dbReference type="PDBsum" id="1SAT"/>
<dbReference type="PDBsum" id="1SMP"/>
<dbReference type="PDBsum" id="4I35"/>
<dbReference type="PDBsum" id="5D7W"/>
<dbReference type="SMR" id="P23694"/>
<dbReference type="MINT" id="P23694"/>
<dbReference type="STRING" id="273526.SMDB11_4311"/>
<dbReference type="MEROPS" id="M10.051"/>
<dbReference type="EvolutionaryTrace" id="P23694"/>
<dbReference type="GO" id="GO:0031012">
    <property type="term" value="C:extracellular matrix"/>
    <property type="evidence" value="ECO:0007669"/>
    <property type="project" value="InterPro"/>
</dbReference>
<dbReference type="GO" id="GO:0005576">
    <property type="term" value="C:extracellular region"/>
    <property type="evidence" value="ECO:0000314"/>
    <property type="project" value="UniProtKB"/>
</dbReference>
<dbReference type="GO" id="GO:0005615">
    <property type="term" value="C:extracellular space"/>
    <property type="evidence" value="ECO:0007669"/>
    <property type="project" value="InterPro"/>
</dbReference>
<dbReference type="GO" id="GO:0005509">
    <property type="term" value="F:calcium ion binding"/>
    <property type="evidence" value="ECO:0000314"/>
    <property type="project" value="UniProtKB"/>
</dbReference>
<dbReference type="GO" id="GO:0004222">
    <property type="term" value="F:metalloendopeptidase activity"/>
    <property type="evidence" value="ECO:0000314"/>
    <property type="project" value="UniProtKB"/>
</dbReference>
<dbReference type="GO" id="GO:0090729">
    <property type="term" value="F:toxin activity"/>
    <property type="evidence" value="ECO:0000314"/>
    <property type="project" value="UniProtKB"/>
</dbReference>
<dbReference type="GO" id="GO:0008270">
    <property type="term" value="F:zinc ion binding"/>
    <property type="evidence" value="ECO:0000314"/>
    <property type="project" value="UniProtKB"/>
</dbReference>
<dbReference type="GO" id="GO:0006508">
    <property type="term" value="P:proteolysis"/>
    <property type="evidence" value="ECO:0000314"/>
    <property type="project" value="UniProtKB"/>
</dbReference>
<dbReference type="GO" id="GO:0001907">
    <property type="term" value="P:symbiont-mediated killing of host cell"/>
    <property type="evidence" value="ECO:0000314"/>
    <property type="project" value="UniProtKB"/>
</dbReference>
<dbReference type="CDD" id="cd04277">
    <property type="entry name" value="ZnMc_serralysin_like"/>
    <property type="match status" value="1"/>
</dbReference>
<dbReference type="FunFam" id="2.150.10.10:FF:000001">
    <property type="entry name" value="Serralysin"/>
    <property type="match status" value="1"/>
</dbReference>
<dbReference type="FunFam" id="3.40.390.10:FF:000046">
    <property type="entry name" value="Serralysin"/>
    <property type="match status" value="1"/>
</dbReference>
<dbReference type="Gene3D" id="3.40.390.10">
    <property type="entry name" value="Collagenase (Catalytic Domain)"/>
    <property type="match status" value="1"/>
</dbReference>
<dbReference type="Gene3D" id="2.150.10.10">
    <property type="entry name" value="Serralysin-like metalloprotease, C-terminal"/>
    <property type="match status" value="1"/>
</dbReference>
<dbReference type="InterPro" id="IPR018511">
    <property type="entry name" value="Hemolysin-typ_Ca-bd_CS"/>
</dbReference>
<dbReference type="InterPro" id="IPR001343">
    <property type="entry name" value="Hemolysn_Ca-bd"/>
</dbReference>
<dbReference type="InterPro" id="IPR024079">
    <property type="entry name" value="MetalloPept_cat_dom_sf"/>
</dbReference>
<dbReference type="InterPro" id="IPR001818">
    <property type="entry name" value="Pept_M10_metallopeptidase"/>
</dbReference>
<dbReference type="InterPro" id="IPR016294">
    <property type="entry name" value="Pept_M10B"/>
</dbReference>
<dbReference type="InterPro" id="IPR013858">
    <property type="entry name" value="Peptidase_M10B_C"/>
</dbReference>
<dbReference type="InterPro" id="IPR006026">
    <property type="entry name" value="Peptidase_Metallo"/>
</dbReference>
<dbReference type="InterPro" id="IPR034033">
    <property type="entry name" value="Serralysin-like"/>
</dbReference>
<dbReference type="InterPro" id="IPR011049">
    <property type="entry name" value="Serralysin-like_metalloprot_C"/>
</dbReference>
<dbReference type="NCBIfam" id="NF035945">
    <property type="entry name" value="Zn_serralysin"/>
    <property type="match status" value="1"/>
</dbReference>
<dbReference type="PANTHER" id="PTHR10201">
    <property type="entry name" value="MATRIX METALLOPROTEINASE"/>
    <property type="match status" value="1"/>
</dbReference>
<dbReference type="PANTHER" id="PTHR10201:SF323">
    <property type="entry name" value="MATRIX METALLOPROTEINASE-21"/>
    <property type="match status" value="1"/>
</dbReference>
<dbReference type="Pfam" id="PF00353">
    <property type="entry name" value="HemolysinCabind"/>
    <property type="match status" value="1"/>
</dbReference>
<dbReference type="Pfam" id="PF00413">
    <property type="entry name" value="Peptidase_M10"/>
    <property type="match status" value="1"/>
</dbReference>
<dbReference type="Pfam" id="PF08548">
    <property type="entry name" value="Peptidase_M10_C"/>
    <property type="match status" value="1"/>
</dbReference>
<dbReference type="PIRSF" id="PIRSF001205">
    <property type="entry name" value="Peptidase_M10B"/>
    <property type="match status" value="1"/>
</dbReference>
<dbReference type="PRINTS" id="PR00313">
    <property type="entry name" value="CABNDNGRPT"/>
</dbReference>
<dbReference type="SMART" id="SM00235">
    <property type="entry name" value="ZnMc"/>
    <property type="match status" value="1"/>
</dbReference>
<dbReference type="SUPFAM" id="SSF51120">
    <property type="entry name" value="beta-Roll"/>
    <property type="match status" value="1"/>
</dbReference>
<dbReference type="SUPFAM" id="SSF55486">
    <property type="entry name" value="Metalloproteases ('zincins'), catalytic domain"/>
    <property type="match status" value="1"/>
</dbReference>
<dbReference type="PROSITE" id="PS00330">
    <property type="entry name" value="HEMOLYSIN_CALCIUM"/>
    <property type="match status" value="1"/>
</dbReference>
<dbReference type="PROSITE" id="PS00142">
    <property type="entry name" value="ZINC_PROTEASE"/>
    <property type="match status" value="1"/>
</dbReference>
<reference key="1">
    <citation type="journal article" date="1990" name="Mol. Gen. Genet.">
        <title>The metalloprotease gene of Serratia marcescens strain SM6.</title>
        <authorList>
            <person name="Braunagel S.C."/>
            <person name="Benedik M.J."/>
        </authorList>
    </citation>
    <scope>NUCLEOTIDE SEQUENCE [GENOMIC DNA]</scope>
    <source>
        <strain>SM6</strain>
    </source>
</reference>
<reference key="2">
    <citation type="journal article" date="2006" name="Curr. Microbiol.">
        <title>Purification and properties of a novel insecticidal protein from the locust pathogen Serratia marcescens HR-3.</title>
        <authorList>
            <person name="Tao K."/>
            <person name="Long Z."/>
            <person name="Liu K."/>
            <person name="Tao Y."/>
            <person name="Liu S."/>
        </authorList>
    </citation>
    <scope>PROTEIN SEQUENCE OF 1-18</scope>
    <scope>FUNCTION</scope>
    <scope>CATALYTIC ACTIVITY</scope>
    <scope>COFACTOR</scope>
    <source>
        <strain>HR-3</strain>
    </source>
</reference>
<reference key="3">
    <citation type="journal article" date="1994" name="J. Mol. Biol.">
        <title>Crystal structure of the 50 kDa metallo protease from Serratia marcescens.</title>
        <authorList>
            <person name="Baumann U."/>
        </authorList>
    </citation>
    <scope>X-RAY CRYSTALLOGRAPHY (1.75 ANGSTROMS)</scope>
</reference>
<reference key="4">
    <citation type="journal article" date="1995" name="J. Mol. Biol.">
        <title>Crystal structure of a complex between Serratia marcescens metallo-protease and an inhibitor from Erwinia chrysanthemi.</title>
        <authorList>
            <person name="Baumann U."/>
            <person name="Bauer M."/>
            <person name="Letoffe S."/>
            <person name="Delepelaire P."/>
            <person name="Wandersman C."/>
        </authorList>
    </citation>
    <scope>X-RAY CRYSTALLOGRAPHY (2.3 ANGSTROMS) OF COMPLEX WITH INHIBITOR</scope>
</reference>
<reference key="5">
    <citation type="submission" date="1997-03" db="PDB data bank">
        <authorList>
            <person name="Baumann U."/>
        </authorList>
    </citation>
    <scope>X-RAY CRYSTALLOGRAPHY (1.8 ANGSTROMS)</scope>
</reference>
<accession>P23694</accession>